<name>IL1AP_MOUSE</name>
<proteinExistence type="evidence at protein level"/>
<evidence type="ECO:0000250" key="1">
    <source>
        <dbReference type="UniProtKB" id="Q9NPH3"/>
    </source>
</evidence>
<evidence type="ECO:0000255" key="2"/>
<evidence type="ECO:0000255" key="3">
    <source>
        <dbReference type="PROSITE-ProRule" id="PRU00114"/>
    </source>
</evidence>
<evidence type="ECO:0000255" key="4">
    <source>
        <dbReference type="PROSITE-ProRule" id="PRU00204"/>
    </source>
</evidence>
<evidence type="ECO:0000256" key="5">
    <source>
        <dbReference type="SAM" id="MobiDB-lite"/>
    </source>
</evidence>
<evidence type="ECO:0000269" key="6">
    <source>
    </source>
</evidence>
<evidence type="ECO:0000269" key="7">
    <source>
    </source>
</evidence>
<evidence type="ECO:0000269" key="8">
    <source>
    </source>
</evidence>
<evidence type="ECO:0000269" key="9">
    <source>
    </source>
</evidence>
<evidence type="ECO:0000269" key="10">
    <source>
    </source>
</evidence>
<evidence type="ECO:0000269" key="11">
    <source>
    </source>
</evidence>
<evidence type="ECO:0000269" key="12">
    <source>
    </source>
</evidence>
<evidence type="ECO:0000269" key="13">
    <source>
    </source>
</evidence>
<evidence type="ECO:0000269" key="14">
    <source>
    </source>
</evidence>
<evidence type="ECO:0000269" key="15">
    <source>
    </source>
</evidence>
<evidence type="ECO:0000269" key="16">
    <source>
    </source>
</evidence>
<evidence type="ECO:0000269" key="17">
    <source>
    </source>
</evidence>
<evidence type="ECO:0000269" key="18">
    <source>
    </source>
</evidence>
<evidence type="ECO:0000269" key="19">
    <source>
    </source>
</evidence>
<evidence type="ECO:0000303" key="20">
    <source>
    </source>
</evidence>
<evidence type="ECO:0000303" key="21">
    <source>
    </source>
</evidence>
<evidence type="ECO:0000303" key="22">
    <source>
    </source>
</evidence>
<evidence type="ECO:0000303" key="23">
    <source>
    </source>
</evidence>
<evidence type="ECO:0000303" key="24">
    <source>
    </source>
</evidence>
<evidence type="ECO:0000305" key="25"/>
<evidence type="ECO:0007744" key="26">
    <source>
        <dbReference type="PDB" id="4YFD"/>
    </source>
</evidence>
<evidence type="ECO:0007829" key="27">
    <source>
        <dbReference type="PDB" id="4YFD"/>
    </source>
</evidence>
<evidence type="ECO:0007829" key="28">
    <source>
        <dbReference type="PDB" id="5VI4"/>
    </source>
</evidence>
<sequence length="570" mass="65741">MGLLWYLMSLSFYGILQSHASERCDDWGLDTMRQIQVFEDEPARIKCPLFEHFLKYNYSTAHSSGLTLIWYWTRQDRDLEEPINFRLPENRISKEKDVLWFRPTLLNDTGNYTCMLRNTTYCSKVAFPLEVVQKDSCFNSAMRFPVHKMYIEHGIHKITCPNVDGYFPSSVKPSVTWYKGCTEIVDFHNVLPEGMNLSFFIPLVSNNGNYTCVVTYPENGRLFHLTRTVTVKVVGSPKDALPPQIYSPNDRVVYEKEPGEELVIPCKVYFSFIMDSHNEVWWTIDGKKPDDVTVDITINESVSYSSTEDETRTQILSIKKVTPEDLRRNYVCHARNTKGEAEQAAKVKQKVIPPRYTVELACGFGATVFLVVVLIVVYHVYWLEMVLFYRAHFGTDETILDGKEYDIYVSYARNVEEEEFVLLTLRGVLENEFGYKLCIFDRDSLPGGIVTDETLSFIQKSRRLLVVLSPNYVLQGTQALLELKAGLENMASRGNINVILVQYKAVKDMKVKELKRAKTVLTVIKWKGEKSKYPQGRFWKQLQVAMPVKKSPRWSSNDKQGLSYSSLKNV</sequence>
<keyword id="KW-0002">3D-structure</keyword>
<keyword id="KW-0025">Alternative splicing</keyword>
<keyword id="KW-1003">Cell membrane</keyword>
<keyword id="KW-1015">Disulfide bond</keyword>
<keyword id="KW-0325">Glycoprotein</keyword>
<keyword id="KW-0378">Hydrolase</keyword>
<keyword id="KW-0391">Immunity</keyword>
<keyword id="KW-0393">Immunoglobulin domain</keyword>
<keyword id="KW-0395">Inflammatory response</keyword>
<keyword id="KW-0399">Innate immunity</keyword>
<keyword id="KW-0472">Membrane</keyword>
<keyword id="KW-0520">NAD</keyword>
<keyword id="KW-0675">Receptor</keyword>
<keyword id="KW-1185">Reference proteome</keyword>
<keyword id="KW-0677">Repeat</keyword>
<keyword id="KW-0964">Secreted</keyword>
<keyword id="KW-0732">Signal</keyword>
<keyword id="KW-0812">Transmembrane</keyword>
<keyword id="KW-1133">Transmembrane helix</keyword>
<reference key="1">
    <citation type="journal article" date="1995" name="J. Biol. Chem.">
        <title>Molecular cloning and characterization of a second subunit of the interleukin 1 receptor complex.</title>
        <authorList>
            <person name="Greenfeder S.A."/>
            <person name="Nunes P."/>
            <person name="Kwee L."/>
            <person name="Labow M."/>
            <person name="Chizzonite R.A."/>
            <person name="Ju G."/>
        </authorList>
    </citation>
    <scope>NUCLEOTIDE SEQUENCE [MRNA] (ISOFORMS 1 AND 2)</scope>
    <scope>INTERACTION WITH IL1R1</scope>
    <scope>TISSUE SPECIFICITY</scope>
    <scope>SUBCELLULAR LOCATION</scope>
    <source>
        <tissue>Fibroblast</tissue>
    </source>
</reference>
<reference key="2">
    <citation type="journal article" date="2005" name="Science">
        <title>The transcriptional landscape of the mammalian genome.</title>
        <authorList>
            <person name="Carninci P."/>
            <person name="Kasukawa T."/>
            <person name="Katayama S."/>
            <person name="Gough J."/>
            <person name="Frith M.C."/>
            <person name="Maeda N."/>
            <person name="Oyama R."/>
            <person name="Ravasi T."/>
            <person name="Lenhard B."/>
            <person name="Wells C."/>
            <person name="Kodzius R."/>
            <person name="Shimokawa K."/>
            <person name="Bajic V.B."/>
            <person name="Brenner S.E."/>
            <person name="Batalov S."/>
            <person name="Forrest A.R."/>
            <person name="Zavolan M."/>
            <person name="Davis M.J."/>
            <person name="Wilming L.G."/>
            <person name="Aidinis V."/>
            <person name="Allen J.E."/>
            <person name="Ambesi-Impiombato A."/>
            <person name="Apweiler R."/>
            <person name="Aturaliya R.N."/>
            <person name="Bailey T.L."/>
            <person name="Bansal M."/>
            <person name="Baxter L."/>
            <person name="Beisel K.W."/>
            <person name="Bersano T."/>
            <person name="Bono H."/>
            <person name="Chalk A.M."/>
            <person name="Chiu K.P."/>
            <person name="Choudhary V."/>
            <person name="Christoffels A."/>
            <person name="Clutterbuck D.R."/>
            <person name="Crowe M.L."/>
            <person name="Dalla E."/>
            <person name="Dalrymple B.P."/>
            <person name="de Bono B."/>
            <person name="Della Gatta G."/>
            <person name="di Bernardo D."/>
            <person name="Down T."/>
            <person name="Engstrom P."/>
            <person name="Fagiolini M."/>
            <person name="Faulkner G."/>
            <person name="Fletcher C.F."/>
            <person name="Fukushima T."/>
            <person name="Furuno M."/>
            <person name="Futaki S."/>
            <person name="Gariboldi M."/>
            <person name="Georgii-Hemming P."/>
            <person name="Gingeras T.R."/>
            <person name="Gojobori T."/>
            <person name="Green R.E."/>
            <person name="Gustincich S."/>
            <person name="Harbers M."/>
            <person name="Hayashi Y."/>
            <person name="Hensch T.K."/>
            <person name="Hirokawa N."/>
            <person name="Hill D."/>
            <person name="Huminiecki L."/>
            <person name="Iacono M."/>
            <person name="Ikeo K."/>
            <person name="Iwama A."/>
            <person name="Ishikawa T."/>
            <person name="Jakt M."/>
            <person name="Kanapin A."/>
            <person name="Katoh M."/>
            <person name="Kawasawa Y."/>
            <person name="Kelso J."/>
            <person name="Kitamura H."/>
            <person name="Kitano H."/>
            <person name="Kollias G."/>
            <person name="Krishnan S.P."/>
            <person name="Kruger A."/>
            <person name="Kummerfeld S.K."/>
            <person name="Kurochkin I.V."/>
            <person name="Lareau L.F."/>
            <person name="Lazarevic D."/>
            <person name="Lipovich L."/>
            <person name="Liu J."/>
            <person name="Liuni S."/>
            <person name="McWilliam S."/>
            <person name="Madan Babu M."/>
            <person name="Madera M."/>
            <person name="Marchionni L."/>
            <person name="Matsuda H."/>
            <person name="Matsuzawa S."/>
            <person name="Miki H."/>
            <person name="Mignone F."/>
            <person name="Miyake S."/>
            <person name="Morris K."/>
            <person name="Mottagui-Tabar S."/>
            <person name="Mulder N."/>
            <person name="Nakano N."/>
            <person name="Nakauchi H."/>
            <person name="Ng P."/>
            <person name="Nilsson R."/>
            <person name="Nishiguchi S."/>
            <person name="Nishikawa S."/>
            <person name="Nori F."/>
            <person name="Ohara O."/>
            <person name="Okazaki Y."/>
            <person name="Orlando V."/>
            <person name="Pang K.C."/>
            <person name="Pavan W.J."/>
            <person name="Pavesi G."/>
            <person name="Pesole G."/>
            <person name="Petrovsky N."/>
            <person name="Piazza S."/>
            <person name="Reed J."/>
            <person name="Reid J.F."/>
            <person name="Ring B.Z."/>
            <person name="Ringwald M."/>
            <person name="Rost B."/>
            <person name="Ruan Y."/>
            <person name="Salzberg S.L."/>
            <person name="Sandelin A."/>
            <person name="Schneider C."/>
            <person name="Schoenbach C."/>
            <person name="Sekiguchi K."/>
            <person name="Semple C.A."/>
            <person name="Seno S."/>
            <person name="Sessa L."/>
            <person name="Sheng Y."/>
            <person name="Shibata Y."/>
            <person name="Shimada H."/>
            <person name="Shimada K."/>
            <person name="Silva D."/>
            <person name="Sinclair B."/>
            <person name="Sperling S."/>
            <person name="Stupka E."/>
            <person name="Sugiura K."/>
            <person name="Sultana R."/>
            <person name="Takenaka Y."/>
            <person name="Taki K."/>
            <person name="Tammoja K."/>
            <person name="Tan S.L."/>
            <person name="Tang S."/>
            <person name="Taylor M.S."/>
            <person name="Tegner J."/>
            <person name="Teichmann S.A."/>
            <person name="Ueda H.R."/>
            <person name="van Nimwegen E."/>
            <person name="Verardo R."/>
            <person name="Wei C.L."/>
            <person name="Yagi K."/>
            <person name="Yamanishi H."/>
            <person name="Zabarovsky E."/>
            <person name="Zhu S."/>
            <person name="Zimmer A."/>
            <person name="Hide W."/>
            <person name="Bult C."/>
            <person name="Grimmond S.M."/>
            <person name="Teasdale R.D."/>
            <person name="Liu E.T."/>
            <person name="Brusic V."/>
            <person name="Quackenbush J."/>
            <person name="Wahlestedt C."/>
            <person name="Mattick J.S."/>
            <person name="Hume D.A."/>
            <person name="Kai C."/>
            <person name="Sasaki D."/>
            <person name="Tomaru Y."/>
            <person name="Fukuda S."/>
            <person name="Kanamori-Katayama M."/>
            <person name="Suzuki M."/>
            <person name="Aoki J."/>
            <person name="Arakawa T."/>
            <person name="Iida J."/>
            <person name="Imamura K."/>
            <person name="Itoh M."/>
            <person name="Kato T."/>
            <person name="Kawaji H."/>
            <person name="Kawagashira N."/>
            <person name="Kawashima T."/>
            <person name="Kojima M."/>
            <person name="Kondo S."/>
            <person name="Konno H."/>
            <person name="Nakano K."/>
            <person name="Ninomiya N."/>
            <person name="Nishio T."/>
            <person name="Okada M."/>
            <person name="Plessy C."/>
            <person name="Shibata K."/>
            <person name="Shiraki T."/>
            <person name="Suzuki S."/>
            <person name="Tagami M."/>
            <person name="Waki K."/>
            <person name="Watahiki A."/>
            <person name="Okamura-Oho Y."/>
            <person name="Suzuki H."/>
            <person name="Kawai J."/>
            <person name="Hayashizaki Y."/>
        </authorList>
    </citation>
    <scope>NUCLEOTIDE SEQUENCE [LARGE SCALE MRNA] (ISOFORMS 1; 2 AND 3)</scope>
    <source>
        <strain>C57BL/6J</strain>
        <tissue>Brain</tissue>
        <tissue>Diencephalon</tissue>
        <tissue>Spinal cord</tissue>
    </source>
</reference>
<reference key="3">
    <citation type="journal article" date="2009" name="PLoS Biol.">
        <title>Lineage-specific biology revealed by a finished genome assembly of the mouse.</title>
        <authorList>
            <person name="Church D.M."/>
            <person name="Goodstadt L."/>
            <person name="Hillier L.W."/>
            <person name="Zody M.C."/>
            <person name="Goldstein S."/>
            <person name="She X."/>
            <person name="Bult C.J."/>
            <person name="Agarwala R."/>
            <person name="Cherry J.L."/>
            <person name="DiCuccio M."/>
            <person name="Hlavina W."/>
            <person name="Kapustin Y."/>
            <person name="Meric P."/>
            <person name="Maglott D."/>
            <person name="Birtle Z."/>
            <person name="Marques A.C."/>
            <person name="Graves T."/>
            <person name="Zhou S."/>
            <person name="Teague B."/>
            <person name="Potamousis K."/>
            <person name="Churas C."/>
            <person name="Place M."/>
            <person name="Herschleb J."/>
            <person name="Runnheim R."/>
            <person name="Forrest D."/>
            <person name="Amos-Landgraf J."/>
            <person name="Schwartz D.C."/>
            <person name="Cheng Z."/>
            <person name="Lindblad-Toh K."/>
            <person name="Eichler E.E."/>
            <person name="Ponting C.P."/>
        </authorList>
    </citation>
    <scope>NUCLEOTIDE SEQUENCE [LARGE SCALE GENOMIC DNA]</scope>
    <source>
        <strain>C57BL/6J</strain>
    </source>
</reference>
<reference key="4">
    <citation type="journal article" date="2004" name="Genome Res.">
        <title>The status, quality, and expansion of the NIH full-length cDNA project: the Mammalian Gene Collection (MGC).</title>
        <authorList>
            <consortium name="The MGC Project Team"/>
        </authorList>
    </citation>
    <scope>NUCLEOTIDE SEQUENCE [LARGE SCALE MRNA] (ISOFORM 2)</scope>
    <source>
        <tissue>Liver</tissue>
    </source>
</reference>
<reference key="5">
    <citation type="journal article" date="1998" name="J. Immunol.">
        <title>The type II IL-1 receptor interacts with the IL-1 receptor accessory protein: a novel mechanism of regulation of IL-1 responsiveness.</title>
        <authorList>
            <person name="Lang D."/>
            <person name="Knop J."/>
            <person name="Wesche H."/>
            <person name="Raffetseder U."/>
            <person name="Kurrle R."/>
            <person name="Boraschi D."/>
            <person name="Martin M.U."/>
        </authorList>
    </citation>
    <scope>INTERACTION WITH IL1R2</scope>
</reference>
<reference key="6">
    <citation type="journal article" date="2000" name="Nat. Cell Biol.">
        <title>Tollip, a new component of the IL-1R1 pathway, links IRAK to the IL-1 receptor.</title>
        <authorList>
            <person name="Burns K."/>
            <person name="Clatworthy J."/>
            <person name="Martin L."/>
            <person name="Martinon F."/>
            <person name="Plumpton C."/>
            <person name="Maschera B."/>
            <person name="Lewis A."/>
            <person name="Ray K."/>
            <person name="Tschopp J."/>
            <person name="Volpe F."/>
        </authorList>
    </citation>
    <scope>INTERACTION WITH TOLLIP</scope>
</reference>
<reference key="7">
    <citation type="journal article" date="2002" name="J. Biol. Chem.">
        <title>Identification of essential regions in the cytoplasmic tail of interleukin-1 receptor accessory protein critical for interleukin-1 signaling.</title>
        <authorList>
            <person name="Radons J."/>
            <person name="Gabler S."/>
            <person name="Wesche H."/>
            <person name="Korherr C."/>
            <person name="Hofmeister R."/>
            <person name="Falk W."/>
        </authorList>
    </citation>
    <scope>MUTAGENESIS OF 527-LYS--PRO-534</scope>
    <scope>INTERACTION WITH MYD88</scope>
    <scope>FUNCTION</scope>
</reference>
<reference key="8">
    <citation type="journal article" date="2003" name="Biochem. Biophys. Res. Commun.">
        <title>Characterization of a cascade of protein interactions initiated at the IL-1 receptor.</title>
        <authorList>
            <person name="Boch J.A."/>
            <person name="Yoshida Y."/>
            <person name="Koyama Y."/>
            <person name="Wara-Aswapati N."/>
            <person name="Peng H."/>
            <person name="Unlu S."/>
            <person name="Auron P.E."/>
        </authorList>
    </citation>
    <scope>INTERACTION WITH IRAK2</scope>
</reference>
<reference key="9">
    <citation type="journal article" date="2005" name="Arthritis Rheum.">
        <title>Soluble interleukin-1 receptor accessory protein ameliorates collagen-induced arthritis by a different mode of action from that of interleukin-1 receptor antagonist.</title>
        <authorList>
            <person name="Smeets R.L."/>
            <person name="Joosten L.A."/>
            <person name="Arntz O.J."/>
            <person name="Bennink M.B."/>
            <person name="Takahashi N."/>
            <person name="Carlsen H."/>
            <person name="Martin M.U."/>
            <person name="van den Berg W.B."/>
            <person name="van de Loo F.A."/>
        </authorList>
    </citation>
    <scope>FUNCTION</scope>
</reference>
<reference key="10">
    <citation type="journal article" date="2007" name="J. Immunol.">
        <title>IL-1 receptor accessory protein and ST2 comprise the IL-33 receptor complex.</title>
        <authorList>
            <person name="Chackerian A.A."/>
            <person name="Oldham E.R."/>
            <person name="Murphy E.E."/>
            <person name="Schmitz J."/>
            <person name="Pflanz S."/>
            <person name="Kastelein R.A."/>
        </authorList>
    </citation>
    <scope>FUNCTION</scope>
    <scope>SUBUNIT</scope>
</reference>
<reference key="11">
    <citation type="journal article" date="2007" name="Proc. Natl. Acad. Sci. U.S.A.">
        <title>IL-1 receptor accessory protein is essential for IL-33-induced activation of T lymphocytes and mast cells.</title>
        <authorList>
            <person name="Ali S."/>
            <person name="Huber M."/>
            <person name="Kollewe C."/>
            <person name="Bischoff S.C."/>
            <person name="Falk W."/>
            <person name="Martin M.U."/>
        </authorList>
    </citation>
    <scope>FUNCTION</scope>
    <scope>INTERACTION WITH IL1RL1</scope>
</reference>
<reference key="12">
    <citation type="journal article" date="2008" name="Cytokine">
        <title>The IL-1 receptor accessory protein (AcP) is required for IL-33 signaling and soluble AcP enhances the ability of soluble ST2 to inhibit IL-33.</title>
        <authorList>
            <person name="Palmer G."/>
            <person name="Lipsky B.P."/>
            <person name="Smithgall M.D."/>
            <person name="Meininger D."/>
            <person name="Siu S."/>
            <person name="Talabot-Ayer D."/>
            <person name="Gabay C."/>
            <person name="Smith D.E."/>
        </authorList>
    </citation>
    <scope>FUNCTION</scope>
    <scope>INTERACTION WITH IL1RL1</scope>
</reference>
<reference key="13">
    <citation type="journal article" date="2009" name="Immunity">
        <title>A central nervous system-restricted isoform of the interleukin-1 receptor accessory protein modulates neuronal responses to interleukin-1.</title>
        <authorList>
            <person name="Smith D.E."/>
            <person name="Lipsky B.P."/>
            <person name="Russell C."/>
            <person name="Ketchem R.R."/>
            <person name="Kirchner J."/>
            <person name="Hensley K."/>
            <person name="Huang Y."/>
            <person name="Friedman W.J."/>
            <person name="Boissonneault V."/>
            <person name="Plante M.M."/>
            <person name="Rivest S."/>
            <person name="Sims J.E."/>
        </authorList>
    </citation>
    <scope>ALTERNATIVE SPLICING (ISOFORM 3)</scope>
    <scope>TISSUE SPECIFICITY (ISOFORM 3)</scope>
</reference>
<reference key="14">
    <citation type="journal article" date="2010" name="Blood">
        <title>The receptor tyrosine kinase c-Kit controls IL-33 receptor signaling in mast cells.</title>
        <authorList>
            <person name="Drube S."/>
            <person name="Heink S."/>
            <person name="Walter S."/>
            <person name="Loehn T."/>
            <person name="Grusser M."/>
            <person name="Gerbaulet A."/>
            <person name="Berod L."/>
            <person name="Schons J."/>
            <person name="Dudeck A."/>
            <person name="Freitag J."/>
            <person name="Grotha S."/>
            <person name="Reich D."/>
            <person name="Rudeschko O."/>
            <person name="Norgauer J."/>
            <person name="Hartmann K."/>
            <person name="Roers A."/>
            <person name="Kamradt T."/>
        </authorList>
    </citation>
    <scope>INTERACTION WITH KIT</scope>
    <scope>SUBUNIT</scope>
</reference>
<reference key="15">
    <citation type="journal article" date="2011" name="Brain Res.">
        <title>Production and functions of IL-33 in the central nervous system.</title>
        <authorList>
            <person name="Yasuoka S."/>
            <person name="Kawanokuchi J."/>
            <person name="Parajuli B."/>
            <person name="Jin S."/>
            <person name="Doi Y."/>
            <person name="Noda M."/>
            <person name="Sonobe Y."/>
            <person name="Takeuchi H."/>
            <person name="Mizuno T."/>
            <person name="Suzumura A."/>
        </authorList>
    </citation>
    <scope>TISSUE SPECIFICITY</scope>
</reference>
<reference key="16">
    <citation type="journal article" date="2011" name="J. Biol. Chem.">
        <title>Interleukin-36 (IL-36) ligands require processing for full agonist (IL-36alpha, IL-36beta, and IL-36gamma) or antagonist (IL-36Ra) activity.</title>
        <authorList>
            <person name="Towne J.E."/>
            <person name="Renshaw B.R."/>
            <person name="Douangpanya J."/>
            <person name="Lipsky B.P."/>
            <person name="Shen M."/>
            <person name="Gabel C.A."/>
            <person name="Sims J.E."/>
        </authorList>
    </citation>
    <scope>INTERACTION WITH IL1RL2</scope>
    <scope>SUBUNIT</scope>
</reference>
<reference key="17">
    <citation type="journal article" date="2011" name="J. Neurosci.">
        <title>Neuron-specific effects of interleukin-1beta are mediated by a novel isoform of the IL-1 receptor accessory protein.</title>
        <authorList>
            <person name="Huang Y."/>
            <person name="Smith D.E."/>
            <person name="Ibanez-Sandoval O."/>
            <person name="Sims J.E."/>
            <person name="Friedman W.J."/>
        </authorList>
    </citation>
    <scope>FUNCTION (ISOFORM 3)</scope>
    <scope>TISSUE SPECIFICITY (ISOFORM 3)</scope>
</reference>
<reference key="18">
    <citation type="journal article" date="2012" name="Proc. Natl. Acad. Sci. U.S.A.">
        <title>Interleukin-1R3 mediates interleukin-1-induced potassium current increase through fast activation of Akt kinase.</title>
        <authorList>
            <person name="Qian J."/>
            <person name="Zhu L."/>
            <person name="Li Q."/>
            <person name="Belevych N."/>
            <person name="Chen Q."/>
            <person name="Zhao F."/>
            <person name="Herness S."/>
            <person name="Quan N."/>
        </authorList>
    </citation>
    <scope>FUNCTION (ISOFORM 3)</scope>
</reference>
<reference evidence="26" key="19">
    <citation type="journal article" date="2015" name="Nat. Commun.">
        <title>Mechanisms of splicing-dependent trans-synaptic adhesion by PTPdelta-IL1RAPL1/IL-1RAcP for synaptic differentiation.</title>
        <authorList>
            <person name="Yamagata A."/>
            <person name="Yoshida T."/>
            <person name="Sato Y."/>
            <person name="Goto-Ito S."/>
            <person name="Uemura T."/>
            <person name="Maeda A."/>
            <person name="Shiroshima T."/>
            <person name="Iwasawa-Okamoto S."/>
            <person name="Mori H."/>
            <person name="Mishina M."/>
            <person name="Fukai S."/>
        </authorList>
    </citation>
    <scope>X-RAY CRYSTALLOGRAPHY (1.97 ANGSTROMS) OF 21-351 IN COMPLEX WITH PTPRD</scope>
    <scope>DISULFIDE BONDS</scope>
    <scope>GLYCOSYLATION AT ASN-57; ASN-107; ASN-111; ASN-118 AND ASN-209</scope>
    <scope>INTERACTION WITH PTPRD</scope>
    <scope>FUNCTION</scope>
    <scope>MUTAGENESIS OF TRP-27; ASP-30; 69-ILE--TYR-71; 82-PRO--PHE-85 AND LYS-94</scope>
    <scope>REGION</scope>
</reference>
<comment type="function">
    <text evidence="1 6 7 8 9 10 17 23">Coreceptor for IL1RL2 in the IL-36 signaling system. Coreceptor with IL1R1 in the IL-1 signaling system. Associates with IL1R1 bound to IL1B to form the high affinity interleukin-1 receptor complex which mediates interleukin-1-dependent activation of NF-kappa-B and other pathways. Signaling involves the recruitment of adapter molecules such as TOLLIP, MYD88, and IRAK1 or IRAK2 via the respective TIR domains of the receptor/coreceptor subunits. Recruits TOLLIP to the signaling complex. Does not bind to interleukin-1 alone; binding of IL1RN to IL1R1, prevents its association with IL1R1 to form a signaling complex. The cellular response is modulated through a non-signaling association with the membrane IL1R2 decoy receptor. Secreted forms (isoforms 2 and 3) associate with secreted ligand-bound IL1R2 and increase the affinity of secreted IL1R2 for IL1B; this complex formation may be the dominant mechanism for neutralization of IL1B by secreted/soluble receptors. Coreceptor for IL1RL1 in the IL-33 signaling system. Can bidirectionally induce pre- and postsynaptic differentiation of neurons by trans-synaptically binding to PTPRD (PubMed:25908590). May play a role in IL1B-mediated costimulation of IFNG production from T-helper 1 (Th1) cells (By similarity).</text>
</comment>
<comment type="function">
    <molecule>Isoform 2</molecule>
    <text evidence="7 10">Associates with secreted ligand-bound IL1R2 and increases the affinity of secreted IL1R2 for IL1B; this complex formation may be the dominant mechanism for neutralization of IL1B by secreted/soluble receptors. Enhances the ability of secreted IL1R1 to inhibit IL-33 signaling.</text>
</comment>
<comment type="function">
    <molecule>Isoform 3</molecule>
    <text evidence="15 16">Required for Src phosphorylation by IL1B. Required for IL1B-potentiated NMDA-induced calcium influx in neurons acting in cooperation with IL1R1 isoform 2 to mediate Akt kinase activation.</text>
</comment>
<comment type="catalytic activity">
    <reaction evidence="4">
        <text>NAD(+) + H2O = ADP-D-ribose + nicotinamide + H(+)</text>
        <dbReference type="Rhea" id="RHEA:16301"/>
        <dbReference type="ChEBI" id="CHEBI:15377"/>
        <dbReference type="ChEBI" id="CHEBI:15378"/>
        <dbReference type="ChEBI" id="CHEBI:17154"/>
        <dbReference type="ChEBI" id="CHEBI:57540"/>
        <dbReference type="ChEBI" id="CHEBI:57967"/>
        <dbReference type="EC" id="3.2.2.6"/>
    </reaction>
    <physiologicalReaction direction="left-to-right" evidence="4">
        <dbReference type="Rhea" id="RHEA:16302"/>
    </physiologicalReaction>
</comment>
<comment type="subunit">
    <text evidence="8 9 12 14 17 19">The interleukin-36 receptor complex is a heterodimer of IL1RL2 and IL1RAP; the association is inhibited by IL36RN. The interleukin-1 receptor complex is a heterodimer of IL1R1 and IL1RAP. Associates with IL1R2 to form a non-signaling interleukin-1 receptor complex. Interacts with IL-33-bound IL1RL1 to form the minimal interleukin-33 signaling complex with a 1:1:1 stoichiometry. Interacts with KIT (independently of stimulation with KITLG/SCF). A mast cell-specific KITLG/SCF-induced interleukin-33 signaling complex contains IL1RL1, IL1RAP, KIT and MYD88. Interacts (via the first immunoglobilin domain) with PTPRD (via the third immunoglobilin domain); induces pre- and postsynaptic differentiation of neurons (PubMed:25908590).</text>
</comment>
<comment type="interaction">
    <interactant intactId="EBI-525035">
        <id>Q61730</id>
    </interactant>
    <interactant intactId="EBI-525078">
        <id>P14719</id>
        <label>Il1rl1</label>
    </interactant>
    <organismsDiffer>false</organismsDiffer>
    <experiments>3</experiments>
</comment>
<comment type="interaction">
    <interactant intactId="EBI-525035">
        <id>Q61730</id>
    </interactant>
    <interactant intactId="EBI-74272">
        <id>Q9QZ06</id>
        <label>Tollip</label>
    </interactant>
    <organismsDiffer>false</organismsDiffer>
    <experiments>2</experiments>
</comment>
<comment type="subcellular location">
    <molecule>Isoform 1</molecule>
    <subcellularLocation>
        <location>Cell membrane</location>
        <topology>Single-pass type I membrane protein</topology>
    </subcellularLocation>
</comment>
<comment type="subcellular location">
    <molecule>Isoform 2</molecule>
    <subcellularLocation>
        <location>Secreted</location>
    </subcellularLocation>
</comment>
<comment type="alternative products">
    <event type="alternative splicing"/>
    <isoform>
        <id>Q61730-1</id>
        <name>1</name>
        <name>MuIL-1R AcP</name>
        <sequence type="displayed"/>
    </isoform>
    <isoform>
        <id>Q61730-2</id>
        <name>2</name>
        <name>SmuIL-1R AcP</name>
        <sequence type="described" ref="VSP_008054 VSP_008055"/>
    </isoform>
    <isoform>
        <id>Q61730-3</id>
        <name>3</name>
        <name>IL-1RAcPb</name>
        <sequence type="described" ref="VSP_058171"/>
    </isoform>
</comment>
<comment type="tissue specificity">
    <text evidence="11 13 15 18">Detected in lung, brain, spleen, thymus and liver. Expressed in brain endothelial cells, astrocytes, microglia and neurons. Isoform 3 is predominantly expressed in brain; expressed in hippocampal neurons.</text>
</comment>
<comment type="domain">
    <text evidence="4">The TIR domain mediates NAD(+) hydrolase (NADase) activity. Self-association of TIR domains is required for NADase activity.</text>
</comment>
<comment type="similarity">
    <text evidence="25">Belongs to the interleukin-1 receptor family.</text>
</comment>
<feature type="signal peptide" evidence="2">
    <location>
        <begin position="1"/>
        <end position="20"/>
    </location>
</feature>
<feature type="chain" id="PRO_0000015452" description="Interleukin-1 receptor accessory protein">
    <location>
        <begin position="21"/>
        <end position="570"/>
    </location>
</feature>
<feature type="topological domain" description="Extracellular" evidence="2">
    <location>
        <begin position="21"/>
        <end position="367"/>
    </location>
</feature>
<feature type="transmembrane region" description="Helical" evidence="2">
    <location>
        <begin position="368"/>
        <end position="388"/>
    </location>
</feature>
<feature type="topological domain" description="Cytoplasmic" evidence="2">
    <location>
        <begin position="389"/>
        <end position="570"/>
    </location>
</feature>
<feature type="domain" description="Ig-like C2-type 1">
    <location>
        <begin position="21"/>
        <end position="128"/>
    </location>
</feature>
<feature type="domain" description="Ig-like C2-type 2">
    <location>
        <begin position="139"/>
        <end position="230"/>
    </location>
</feature>
<feature type="domain" description="Ig-like C2-type 3">
    <location>
        <begin position="243"/>
        <end position="348"/>
    </location>
</feature>
<feature type="domain" description="TIR" evidence="4">
    <location>
        <begin position="403"/>
        <end position="546"/>
    </location>
</feature>
<feature type="region of interest" description="Essential for interaction with PTPRD" evidence="17">
    <location>
        <begin position="69"/>
        <end position="85"/>
    </location>
</feature>
<feature type="region of interest" description="Disordered" evidence="5">
    <location>
        <begin position="550"/>
        <end position="570"/>
    </location>
</feature>
<feature type="compositionally biased region" description="Polar residues" evidence="5">
    <location>
        <begin position="553"/>
        <end position="570"/>
    </location>
</feature>
<feature type="active site" evidence="4">
    <location>
        <position position="482"/>
    </location>
</feature>
<feature type="glycosylation site" description="N-linked (GlcNAc...) asparagine" evidence="17 26">
    <location>
        <position position="57"/>
    </location>
</feature>
<feature type="glycosylation site" description="N-linked (GlcNAc...) asparagine" evidence="17 26">
    <location>
        <position position="107"/>
    </location>
</feature>
<feature type="glycosylation site" description="N-linked (GlcNAc...) asparagine" evidence="17 26">
    <location>
        <position position="111"/>
    </location>
</feature>
<feature type="glycosylation site" description="N-linked (GlcNAc...) asparagine" evidence="17 26">
    <location>
        <position position="118"/>
    </location>
</feature>
<feature type="glycosylation site" description="N-linked (GlcNAc...) asparagine" evidence="2">
    <location>
        <position position="196"/>
    </location>
</feature>
<feature type="glycosylation site" description="N-linked (GlcNAc...) asparagine" evidence="17 26">
    <location>
        <position position="209"/>
    </location>
</feature>
<feature type="glycosylation site" description="N-linked (GlcNAc...) asparagine" evidence="2">
    <location>
        <position position="299"/>
    </location>
</feature>
<feature type="disulfide bond" evidence="3 17 26">
    <location>
        <begin position="24"/>
        <end position="122"/>
    </location>
</feature>
<feature type="disulfide bond" evidence="3 17 26">
    <location>
        <begin position="47"/>
        <end position="114"/>
    </location>
</feature>
<feature type="disulfide bond" evidence="3 17 26">
    <location>
        <begin position="137"/>
        <end position="181"/>
    </location>
</feature>
<feature type="disulfide bond" evidence="3 17 26">
    <location>
        <begin position="160"/>
        <end position="212"/>
    </location>
</feature>
<feature type="disulfide bond" evidence="3 17 26">
    <location>
        <begin position="266"/>
        <end position="332"/>
    </location>
</feature>
<feature type="splice variant" id="VSP_008054" description="In isoform 2." evidence="20 21 24">
    <original>VIPPRYTVE</original>
    <variation>GNGCTEPMTL</variation>
    <location>
        <begin position="351"/>
        <end position="359"/>
    </location>
</feature>
<feature type="splice variant" id="VSP_008055" description="In isoform 2." evidence="20 21 24">
    <location>
        <begin position="360"/>
        <end position="570"/>
    </location>
</feature>
<feature type="splice variant" id="VSP_058171" description="In isoform 3.">
    <original>IVTDETLSFIQKSRRLLVVLSPNYVLQGTQALLELKAGLENMASRGNINVILVQYKAVKDMKVKELKRAKTVLTVIKWKGEKSKYPQGRFWKQLQVAMPVKKSPRWSSNDKQGLSYSSLKNV</original>
    <variation>NTVEAVFDFIQRSRRMIVVLSPDYVTEKSISMLEFKLGVMCQNSIATKLIVVEYRPLEQPHPGIMQLKESVSFVSWKGEKSKHSGSKFWKALRLALPLRSLSASSGWNESCSSQSDISLDHVQRRSRLKEPPELRSSERVSGAEPAPGTMSKHRGKPSAACRCCVTYCEGESHLRSKSRAEMHTHPQWETHLCKPPLQESESQWIQNGTRPEPAPQISALALRHFTDLSNNNDFYIL</variation>
    <location>
        <begin position="449"/>
        <end position="570"/>
    </location>
</feature>
<feature type="mutagenesis site" description="Reduces affinity for PTPRD." evidence="17">
    <original>W</original>
    <variation>A</variation>
    <location>
        <position position="27"/>
    </location>
</feature>
<feature type="mutagenesis site" description="Does not affect affinity for PTPRD." evidence="17">
    <original>D</original>
    <variation>A</variation>
    <location>
        <position position="30"/>
    </location>
</feature>
<feature type="mutagenesis site" description="Abolishes interaction with PTPRD; when associates with 82-A--A-85. Significantly reduces synaptogenesis; when associates with 82-A--A-85." evidence="17">
    <original>IWY</original>
    <variation>AWA</variation>
    <location>
        <begin position="69"/>
        <end position="71"/>
    </location>
</feature>
<feature type="mutagenesis site" description="Abolishes interaction with PTPRD; when associates with 69-A--A-71 Significantly reduces synaptogenesis; when associates with 82-A--A-85." evidence="17">
    <original>PINF</original>
    <variation>AINA</variation>
    <location>
        <begin position="82"/>
        <end position="85"/>
    </location>
</feature>
<feature type="mutagenesis site" description="Reduces affinity for PTPRD." evidence="17">
    <original>K</original>
    <variation>A</variation>
    <location>
        <position position="94"/>
    </location>
</feature>
<feature type="mutagenesis site" description="Abolishes interaction with MYD88 and IL-1-dependent activation of NF-kappa-B." evidence="6">
    <original>KGEKSKYP</original>
    <variation>AAAAAAAA</variation>
    <location>
        <begin position="527"/>
        <end position="534"/>
    </location>
</feature>
<feature type="strand" evidence="28">
    <location>
        <begin position="26"/>
        <end position="30"/>
    </location>
</feature>
<feature type="strand" evidence="28">
    <location>
        <begin position="35"/>
        <end position="38"/>
    </location>
</feature>
<feature type="strand" evidence="28">
    <location>
        <begin position="43"/>
        <end position="46"/>
    </location>
</feature>
<feature type="helix" evidence="28">
    <location>
        <begin position="49"/>
        <end position="52"/>
    </location>
</feature>
<feature type="helix" evidence="28">
    <location>
        <begin position="58"/>
        <end position="63"/>
    </location>
</feature>
<feature type="strand" evidence="28">
    <location>
        <begin position="67"/>
        <end position="74"/>
    </location>
</feature>
<feature type="strand" evidence="27">
    <location>
        <begin position="85"/>
        <end position="87"/>
    </location>
</feature>
<feature type="helix" evidence="27">
    <location>
        <begin position="88"/>
        <end position="90"/>
    </location>
</feature>
<feature type="strand" evidence="28">
    <location>
        <begin position="91"/>
        <end position="95"/>
    </location>
</feature>
<feature type="strand" evidence="28">
    <location>
        <begin position="98"/>
        <end position="103"/>
    </location>
</feature>
<feature type="helix" evidence="28">
    <location>
        <begin position="106"/>
        <end position="108"/>
    </location>
</feature>
<feature type="strand" evidence="28">
    <location>
        <begin position="110"/>
        <end position="117"/>
    </location>
</feature>
<feature type="strand" evidence="28">
    <location>
        <begin position="122"/>
        <end position="132"/>
    </location>
</feature>
<feature type="strand" evidence="28">
    <location>
        <begin position="146"/>
        <end position="150"/>
    </location>
</feature>
<feature type="strand" evidence="28">
    <location>
        <begin position="156"/>
        <end position="159"/>
    </location>
</feature>
<feature type="strand" evidence="28">
    <location>
        <begin position="174"/>
        <end position="179"/>
    </location>
</feature>
<feature type="strand" evidence="28">
    <location>
        <begin position="182"/>
        <end position="185"/>
    </location>
</feature>
<feature type="strand" evidence="28">
    <location>
        <begin position="188"/>
        <end position="193"/>
    </location>
</feature>
<feature type="strand" evidence="28">
    <location>
        <begin position="196"/>
        <end position="201"/>
    </location>
</feature>
<feature type="helix" evidence="28">
    <location>
        <begin position="204"/>
        <end position="206"/>
    </location>
</feature>
<feature type="strand" evidence="28">
    <location>
        <begin position="208"/>
        <end position="218"/>
    </location>
</feature>
<feature type="strand" evidence="28">
    <location>
        <begin position="221"/>
        <end position="234"/>
    </location>
</feature>
<feature type="helix" evidence="28">
    <location>
        <begin position="237"/>
        <end position="239"/>
    </location>
</feature>
<feature type="strand" evidence="28">
    <location>
        <begin position="244"/>
        <end position="248"/>
    </location>
</feature>
<feature type="strand" evidence="27">
    <location>
        <begin position="250"/>
        <end position="252"/>
    </location>
</feature>
<feature type="strand" evidence="28">
    <location>
        <begin position="264"/>
        <end position="270"/>
    </location>
</feature>
<feature type="strand" evidence="28">
    <location>
        <begin position="279"/>
        <end position="286"/>
    </location>
</feature>
<feature type="strand" evidence="27">
    <location>
        <begin position="296"/>
        <end position="299"/>
    </location>
</feature>
<feature type="strand" evidence="28">
    <location>
        <begin position="300"/>
        <end position="304"/>
    </location>
</feature>
<feature type="strand" evidence="28">
    <location>
        <begin position="310"/>
        <end position="316"/>
    </location>
</feature>
<feature type="turn" evidence="28">
    <location>
        <begin position="325"/>
        <end position="327"/>
    </location>
</feature>
<feature type="strand" evidence="28">
    <location>
        <begin position="330"/>
        <end position="336"/>
    </location>
</feature>
<feature type="strand" evidence="28">
    <location>
        <begin position="339"/>
        <end position="345"/>
    </location>
</feature>
<gene>
    <name type="primary">Il1rap</name>
</gene>
<dbReference type="EC" id="3.2.2.6" evidence="4"/>
<dbReference type="EMBL" id="X85999">
    <property type="protein sequence ID" value="CAA59991.1"/>
    <property type="molecule type" value="mRNA"/>
</dbReference>
<dbReference type="EMBL" id="AK039582">
    <property type="protein sequence ID" value="BAC30392.1"/>
    <property type="molecule type" value="mRNA"/>
</dbReference>
<dbReference type="EMBL" id="AK045686">
    <property type="protein sequence ID" value="BAC32457.1"/>
    <property type="molecule type" value="mRNA"/>
</dbReference>
<dbReference type="EMBL" id="AK136782">
    <property type="protein sequence ID" value="BAE23128.1"/>
    <property type="molecule type" value="mRNA"/>
</dbReference>
<dbReference type="EMBL" id="AC154234">
    <property type="status" value="NOT_ANNOTATED_CDS"/>
    <property type="molecule type" value="Genomic_DNA"/>
</dbReference>
<dbReference type="EMBL" id="AC154601">
    <property type="status" value="NOT_ANNOTATED_CDS"/>
    <property type="molecule type" value="Genomic_DNA"/>
</dbReference>
<dbReference type="EMBL" id="CT009561">
    <property type="status" value="NOT_ANNOTATED_CDS"/>
    <property type="molecule type" value="Genomic_DNA"/>
</dbReference>
<dbReference type="EMBL" id="BC021159">
    <property type="protein sequence ID" value="AAH21159.1"/>
    <property type="molecule type" value="mRNA"/>
</dbReference>
<dbReference type="CCDS" id="CCDS28089.1">
    <molecule id="Q61730-1"/>
</dbReference>
<dbReference type="CCDS" id="CCDS49815.1">
    <molecule id="Q61730-3"/>
</dbReference>
<dbReference type="CCDS" id="CCDS57023.1">
    <molecule id="Q61730-2"/>
</dbReference>
<dbReference type="PIR" id="A57535">
    <property type="entry name" value="A57535"/>
</dbReference>
<dbReference type="RefSeq" id="NP_001152790.1">
    <molecule id="Q61730-3"/>
    <property type="nucleotide sequence ID" value="NM_001159318.1"/>
</dbReference>
<dbReference type="RefSeq" id="NP_032390.1">
    <molecule id="Q61730-1"/>
    <property type="nucleotide sequence ID" value="NM_008364.2"/>
</dbReference>
<dbReference type="RefSeq" id="NP_598864.1">
    <molecule id="Q61730-2"/>
    <property type="nucleotide sequence ID" value="NM_134103.2"/>
</dbReference>
<dbReference type="RefSeq" id="XP_036015684.1">
    <molecule id="Q61730-3"/>
    <property type="nucleotide sequence ID" value="XM_036159791.1"/>
</dbReference>
<dbReference type="RefSeq" id="XP_036015685.1">
    <molecule id="Q61730-3"/>
    <property type="nucleotide sequence ID" value="XM_036159792.1"/>
</dbReference>
<dbReference type="PDB" id="4YFD">
    <property type="method" value="X-ray"/>
    <property type="resolution" value="3.25 A"/>
    <property type="chains" value="B=21-351"/>
</dbReference>
<dbReference type="PDB" id="5VI4">
    <property type="method" value="X-ray"/>
    <property type="resolution" value="2.79 A"/>
    <property type="chains" value="C/F=21-350"/>
</dbReference>
<dbReference type="PDBsum" id="4YFD"/>
<dbReference type="PDBsum" id="5VI4"/>
<dbReference type="SMR" id="Q61730"/>
<dbReference type="BioGRID" id="200628">
    <property type="interactions" value="6"/>
</dbReference>
<dbReference type="CORUM" id="Q61730"/>
<dbReference type="DIP" id="DIP-296N"/>
<dbReference type="FunCoup" id="Q61730">
    <property type="interactions" value="806"/>
</dbReference>
<dbReference type="IntAct" id="Q61730">
    <property type="interactions" value="3"/>
</dbReference>
<dbReference type="STRING" id="10090.ENSMUSP00000093843"/>
<dbReference type="GlyCosmos" id="Q61730">
    <property type="glycosylation" value="7 sites, No reported glycans"/>
</dbReference>
<dbReference type="GlyGen" id="Q61730">
    <property type="glycosylation" value="8 sites, 1 N-linked glycan (1 site), 1 O-linked glycan (1 site)"/>
</dbReference>
<dbReference type="iPTMnet" id="Q61730"/>
<dbReference type="PhosphoSitePlus" id="Q61730"/>
<dbReference type="CPTAC" id="non-CPTAC-3320"/>
<dbReference type="jPOST" id="Q61730"/>
<dbReference type="PeptideAtlas" id="Q61730"/>
<dbReference type="ProteomicsDB" id="269469">
    <molecule id="Q61730-1"/>
</dbReference>
<dbReference type="ProteomicsDB" id="269470">
    <molecule id="Q61730-2"/>
</dbReference>
<dbReference type="ProteomicsDB" id="269471">
    <molecule id="Q61730-3"/>
</dbReference>
<dbReference type="Pumba" id="Q61730"/>
<dbReference type="ABCD" id="Q61730">
    <property type="antibodies" value="19 sequenced antibodies"/>
</dbReference>
<dbReference type="Antibodypedia" id="19361">
    <property type="antibodies" value="431 antibodies from 40 providers"/>
</dbReference>
<dbReference type="DNASU" id="16180"/>
<dbReference type="Ensembl" id="ENSMUST00000023156.13">
    <molecule id="Q61730-1"/>
    <property type="protein sequence ID" value="ENSMUSP00000023156.7"/>
    <property type="gene ID" value="ENSMUSG00000022514.15"/>
</dbReference>
<dbReference type="Ensembl" id="ENSMUST00000096129.9">
    <molecule id="Q61730-3"/>
    <property type="protein sequence ID" value="ENSMUSP00000093843.3"/>
    <property type="gene ID" value="ENSMUSG00000022514.15"/>
</dbReference>
<dbReference type="Ensembl" id="ENSMUST00000174202.8">
    <molecule id="Q61730-2"/>
    <property type="protein sequence ID" value="ENSMUSP00000134202.2"/>
    <property type="gene ID" value="ENSMUSG00000022514.15"/>
</dbReference>
<dbReference type="GeneID" id="16180"/>
<dbReference type="KEGG" id="mmu:16180"/>
<dbReference type="UCSC" id="uc007yve.2">
    <molecule id="Q61730-1"/>
    <property type="organism name" value="mouse"/>
</dbReference>
<dbReference type="UCSC" id="uc007yvg.2">
    <property type="organism name" value="mouse"/>
</dbReference>
<dbReference type="AGR" id="MGI:104975"/>
<dbReference type="CTD" id="3556"/>
<dbReference type="MGI" id="MGI:104975">
    <property type="gene designation" value="Il1rap"/>
</dbReference>
<dbReference type="VEuPathDB" id="HostDB:ENSMUSG00000022514"/>
<dbReference type="GeneTree" id="ENSGT01090000260076"/>
<dbReference type="HOGENOM" id="CLU_025552_3_2_1"/>
<dbReference type="InParanoid" id="Q61730"/>
<dbReference type="OMA" id="YICTVRY"/>
<dbReference type="PhylomeDB" id="Q61730"/>
<dbReference type="TreeFam" id="TF325519"/>
<dbReference type="Reactome" id="R-MMU-1257604">
    <property type="pathway name" value="PIP3 activates AKT signaling"/>
</dbReference>
<dbReference type="Reactome" id="R-MMU-388844">
    <property type="pathway name" value="Receptor-type tyrosine-protein phosphatases"/>
</dbReference>
<dbReference type="Reactome" id="R-MMU-6811558">
    <property type="pathway name" value="PI5P, PP2A and IER3 Regulate PI3K/AKT Signaling"/>
</dbReference>
<dbReference type="Reactome" id="R-MMU-9014826">
    <property type="pathway name" value="Interleukin-36 pathway"/>
</dbReference>
<dbReference type="Reactome" id="R-MMU-9014843">
    <property type="pathway name" value="Interleukin-33 signaling"/>
</dbReference>
<dbReference type="Reactome" id="R-MMU-9020702">
    <property type="pathway name" value="Interleukin-1 signaling"/>
</dbReference>
<dbReference type="BioGRID-ORCS" id="16180">
    <property type="hits" value="0 hits in 81 CRISPR screens"/>
</dbReference>
<dbReference type="ChiTaRS" id="Il1rap">
    <property type="organism name" value="mouse"/>
</dbReference>
<dbReference type="EvolutionaryTrace" id="Q61730"/>
<dbReference type="PRO" id="PR:Q61730"/>
<dbReference type="Proteomes" id="UP000000589">
    <property type="component" value="Chromosome 16"/>
</dbReference>
<dbReference type="RNAct" id="Q61730">
    <property type="molecule type" value="protein"/>
</dbReference>
<dbReference type="Bgee" id="ENSMUSG00000022514">
    <property type="expression patterns" value="Expressed in left lobe of liver and 214 other cell types or tissues"/>
</dbReference>
<dbReference type="ExpressionAtlas" id="Q61730">
    <property type="expression patterns" value="baseline and differential"/>
</dbReference>
<dbReference type="GO" id="GO:0005576">
    <property type="term" value="C:extracellular region"/>
    <property type="evidence" value="ECO:0007669"/>
    <property type="project" value="UniProtKB-SubCell"/>
</dbReference>
<dbReference type="GO" id="GO:0098978">
    <property type="term" value="C:glutamatergic synapse"/>
    <property type="evidence" value="ECO:0000314"/>
    <property type="project" value="SynGO"/>
</dbReference>
<dbReference type="GO" id="GO:0005886">
    <property type="term" value="C:plasma membrane"/>
    <property type="evidence" value="ECO:0007669"/>
    <property type="project" value="UniProtKB-SubCell"/>
</dbReference>
<dbReference type="GO" id="GO:0045202">
    <property type="term" value="C:synapse"/>
    <property type="evidence" value="ECO:0000314"/>
    <property type="project" value="SynGO"/>
</dbReference>
<dbReference type="GO" id="GO:0015026">
    <property type="term" value="F:coreceptor activity"/>
    <property type="evidence" value="ECO:0007669"/>
    <property type="project" value="Ensembl"/>
</dbReference>
<dbReference type="GO" id="GO:0004908">
    <property type="term" value="F:interleukin-1 receptor activity"/>
    <property type="evidence" value="ECO:0000314"/>
    <property type="project" value="MGI"/>
</dbReference>
<dbReference type="GO" id="GO:0002114">
    <property type="term" value="F:interleukin-33 receptor activity"/>
    <property type="evidence" value="ECO:0000315"/>
    <property type="project" value="UniProtKB"/>
</dbReference>
<dbReference type="GO" id="GO:0061809">
    <property type="term" value="F:NAD+ nucleosidase activity, cyclic ADP-ribose generating"/>
    <property type="evidence" value="ECO:0007669"/>
    <property type="project" value="UniProtKB-EC"/>
</dbReference>
<dbReference type="GO" id="GO:1990782">
    <property type="term" value="F:protein tyrosine kinase binding"/>
    <property type="evidence" value="ECO:0000353"/>
    <property type="project" value="MGI"/>
</dbReference>
<dbReference type="GO" id="GO:0019221">
    <property type="term" value="P:cytokine-mediated signaling pathway"/>
    <property type="evidence" value="ECO:0000314"/>
    <property type="project" value="MGI"/>
</dbReference>
<dbReference type="GO" id="GO:0006954">
    <property type="term" value="P:inflammatory response"/>
    <property type="evidence" value="ECO:0007669"/>
    <property type="project" value="UniProtKB-KW"/>
</dbReference>
<dbReference type="GO" id="GO:0045087">
    <property type="term" value="P:innate immune response"/>
    <property type="evidence" value="ECO:0007669"/>
    <property type="project" value="UniProtKB-KW"/>
</dbReference>
<dbReference type="GO" id="GO:0070498">
    <property type="term" value="P:interleukin-1-mediated signaling pathway"/>
    <property type="evidence" value="ECO:0007669"/>
    <property type="project" value="Ensembl"/>
</dbReference>
<dbReference type="GO" id="GO:0038172">
    <property type="term" value="P:interleukin-33-mediated signaling pathway"/>
    <property type="evidence" value="ECO:0000315"/>
    <property type="project" value="UniProtKB"/>
</dbReference>
<dbReference type="GO" id="GO:0032736">
    <property type="term" value="P:positive regulation of interleukin-13 production"/>
    <property type="evidence" value="ECO:0000315"/>
    <property type="project" value="UniProtKB"/>
</dbReference>
<dbReference type="GO" id="GO:0032753">
    <property type="term" value="P:positive regulation of interleukin-4 production"/>
    <property type="evidence" value="ECO:0000315"/>
    <property type="project" value="UniProtKB"/>
</dbReference>
<dbReference type="GO" id="GO:0032754">
    <property type="term" value="P:positive regulation of interleukin-5 production"/>
    <property type="evidence" value="ECO:0000315"/>
    <property type="project" value="UniProtKB"/>
</dbReference>
<dbReference type="GO" id="GO:0032755">
    <property type="term" value="P:positive regulation of interleukin-6 production"/>
    <property type="evidence" value="ECO:0000315"/>
    <property type="project" value="UniProtKB"/>
</dbReference>
<dbReference type="GO" id="GO:0051092">
    <property type="term" value="P:positive regulation of NF-kappaB transcription factor activity"/>
    <property type="evidence" value="ECO:0000315"/>
    <property type="project" value="UniProtKB"/>
</dbReference>
<dbReference type="GO" id="GO:0051965">
    <property type="term" value="P:positive regulation of synapse assembly"/>
    <property type="evidence" value="ECO:0000314"/>
    <property type="project" value="UniProtKB"/>
</dbReference>
<dbReference type="GO" id="GO:0099151">
    <property type="term" value="P:regulation of postsynaptic density assembly"/>
    <property type="evidence" value="ECO:0000314"/>
    <property type="project" value="SynGO"/>
</dbReference>
<dbReference type="GO" id="GO:1905606">
    <property type="term" value="P:regulation of presynapse assembly"/>
    <property type="evidence" value="ECO:0000314"/>
    <property type="project" value="SynGO"/>
</dbReference>
<dbReference type="GO" id="GO:0099560">
    <property type="term" value="P:synaptic membrane adhesion"/>
    <property type="evidence" value="ECO:0000314"/>
    <property type="project" value="SynGO"/>
</dbReference>
<dbReference type="GO" id="GO:0099545">
    <property type="term" value="P:trans-synaptic signaling by trans-synaptic complex"/>
    <property type="evidence" value="ECO:0000314"/>
    <property type="project" value="SynGO"/>
</dbReference>
<dbReference type="CDD" id="cd20992">
    <property type="entry name" value="Ig1_IL1R_like"/>
    <property type="match status" value="1"/>
</dbReference>
<dbReference type="CDD" id="cd20931">
    <property type="entry name" value="Ig3_IL1RAP"/>
    <property type="match status" value="1"/>
</dbReference>
<dbReference type="FunFam" id="2.60.40.10:FF:000462">
    <property type="entry name" value="Interleukin 1 receptor accessory protein"/>
    <property type="match status" value="1"/>
</dbReference>
<dbReference type="FunFam" id="2.60.40.10:FF:000634">
    <property type="entry name" value="Interleukin 1 receptor accessory protein"/>
    <property type="match status" value="1"/>
</dbReference>
<dbReference type="FunFam" id="2.60.40.10:FF:000756">
    <property type="entry name" value="Interleukin 1 receptor accessory protein"/>
    <property type="match status" value="1"/>
</dbReference>
<dbReference type="FunFam" id="3.40.50.10140:FF:000002">
    <property type="entry name" value="Interleukin 1 receptor accessory protein"/>
    <property type="match status" value="1"/>
</dbReference>
<dbReference type="Gene3D" id="2.60.40.10">
    <property type="entry name" value="Immunoglobulins"/>
    <property type="match status" value="3"/>
</dbReference>
<dbReference type="Gene3D" id="3.40.50.10140">
    <property type="entry name" value="Toll/interleukin-1 receptor homology (TIR) domain"/>
    <property type="match status" value="1"/>
</dbReference>
<dbReference type="InterPro" id="IPR007110">
    <property type="entry name" value="Ig-like_dom"/>
</dbReference>
<dbReference type="InterPro" id="IPR036179">
    <property type="entry name" value="Ig-like_dom_sf"/>
</dbReference>
<dbReference type="InterPro" id="IPR013783">
    <property type="entry name" value="Ig-like_fold"/>
</dbReference>
<dbReference type="InterPro" id="IPR003599">
    <property type="entry name" value="Ig_sub"/>
</dbReference>
<dbReference type="InterPro" id="IPR015621">
    <property type="entry name" value="IL-1_rcpt_fam"/>
</dbReference>
<dbReference type="InterPro" id="IPR004074">
    <property type="entry name" value="IL-1_rcpt_I/II-typ"/>
</dbReference>
<dbReference type="InterPro" id="IPR041416">
    <property type="entry name" value="IL-1RAcP-like_ig"/>
</dbReference>
<dbReference type="InterPro" id="IPR000157">
    <property type="entry name" value="TIR_dom"/>
</dbReference>
<dbReference type="InterPro" id="IPR035897">
    <property type="entry name" value="Toll_tir_struct_dom_sf"/>
</dbReference>
<dbReference type="PANTHER" id="PTHR11890:SF20">
    <property type="entry name" value="INTERLEUKIN-1 RECEPTOR ACCESSORY PROTEIN"/>
    <property type="match status" value="1"/>
</dbReference>
<dbReference type="PANTHER" id="PTHR11890">
    <property type="entry name" value="INTERLEUKIN-1 RECEPTOR FAMILY MEMBER"/>
    <property type="match status" value="1"/>
</dbReference>
<dbReference type="Pfam" id="PF13895">
    <property type="entry name" value="Ig_2"/>
    <property type="match status" value="1"/>
</dbReference>
<dbReference type="Pfam" id="PF13927">
    <property type="entry name" value="Ig_3"/>
    <property type="match status" value="1"/>
</dbReference>
<dbReference type="Pfam" id="PF18452">
    <property type="entry name" value="Ig_6"/>
    <property type="match status" value="1"/>
</dbReference>
<dbReference type="Pfam" id="PF01582">
    <property type="entry name" value="TIR"/>
    <property type="match status" value="1"/>
</dbReference>
<dbReference type="PRINTS" id="PR01536">
    <property type="entry name" value="INTRLKN1R12F"/>
</dbReference>
<dbReference type="PRINTS" id="PR01537">
    <property type="entry name" value="INTRLKN1R1F"/>
</dbReference>
<dbReference type="SMART" id="SM00409">
    <property type="entry name" value="IG"/>
    <property type="match status" value="3"/>
</dbReference>
<dbReference type="SMART" id="SM00255">
    <property type="entry name" value="TIR"/>
    <property type="match status" value="1"/>
</dbReference>
<dbReference type="SUPFAM" id="SSF48726">
    <property type="entry name" value="Immunoglobulin"/>
    <property type="match status" value="3"/>
</dbReference>
<dbReference type="SUPFAM" id="SSF52200">
    <property type="entry name" value="Toll/Interleukin receptor TIR domain"/>
    <property type="match status" value="1"/>
</dbReference>
<dbReference type="PROSITE" id="PS50835">
    <property type="entry name" value="IG_LIKE"/>
    <property type="match status" value="2"/>
</dbReference>
<dbReference type="PROSITE" id="PS50104">
    <property type="entry name" value="TIR"/>
    <property type="match status" value="1"/>
</dbReference>
<organism>
    <name type="scientific">Mus musculus</name>
    <name type="common">Mouse</name>
    <dbReference type="NCBI Taxonomy" id="10090"/>
    <lineage>
        <taxon>Eukaryota</taxon>
        <taxon>Metazoa</taxon>
        <taxon>Chordata</taxon>
        <taxon>Craniata</taxon>
        <taxon>Vertebrata</taxon>
        <taxon>Euteleostomi</taxon>
        <taxon>Mammalia</taxon>
        <taxon>Eutheria</taxon>
        <taxon>Euarchontoglires</taxon>
        <taxon>Glires</taxon>
        <taxon>Rodentia</taxon>
        <taxon>Myomorpha</taxon>
        <taxon>Muroidea</taxon>
        <taxon>Muridae</taxon>
        <taxon>Murinae</taxon>
        <taxon>Mus</taxon>
        <taxon>Mus</taxon>
    </lineage>
</organism>
<protein>
    <recommendedName>
        <fullName>Interleukin-1 receptor accessory protein</fullName>
        <shortName>IL-1 receptor accessory protein</shortName>
        <shortName>IL-1RAcP</shortName>
        <ecNumber evidence="4">3.2.2.6</ecNumber>
    </recommendedName>
    <alternativeName>
        <fullName evidence="22">Interleukin-33 receptot beta chain</fullName>
    </alternativeName>
</protein>
<accession>Q61730</accession>
<accession>Q3UVZ1</accession>
<accession>Q8VCB9</accession>